<organism>
    <name type="scientific">Shewanella amazonensis (strain ATCC BAA-1098 / SB2B)</name>
    <dbReference type="NCBI Taxonomy" id="326297"/>
    <lineage>
        <taxon>Bacteria</taxon>
        <taxon>Pseudomonadati</taxon>
        <taxon>Pseudomonadota</taxon>
        <taxon>Gammaproteobacteria</taxon>
        <taxon>Alteromonadales</taxon>
        <taxon>Shewanellaceae</taxon>
        <taxon>Shewanella</taxon>
    </lineage>
</organism>
<comment type="function">
    <text evidence="1">Located at the top of the head of the 30S subunit, it contacts several helices of the 16S rRNA. In the 70S ribosome it contacts the 23S rRNA (bridge B1a) and protein L5 of the 50S subunit (bridge B1b), connecting the 2 subunits; these bridges are implicated in subunit movement. Contacts the tRNAs in the A and P-sites.</text>
</comment>
<comment type="subunit">
    <text evidence="1">Part of the 30S ribosomal subunit. Forms a loose heterodimer with protein S19. Forms two bridges to the 50S subunit in the 70S ribosome.</text>
</comment>
<comment type="similarity">
    <text evidence="1">Belongs to the universal ribosomal protein uS13 family.</text>
</comment>
<accession>A1S240</accession>
<sequence length="118" mass="13260">MARIAGINIPDHKHAVIALTAIYGIGRTRAKAICAATAIAEDAKIKELSEAQIDTLREEVAKYTVEGDLRREVSMNIKRLMDLGCYRGLRHRRSLPLRGQRTKTNARTRKGPRKPIKK</sequence>
<name>RS13_SHEAM</name>
<gene>
    <name evidence="1" type="primary">rpsM</name>
    <name type="ordered locus">Sama_0235</name>
</gene>
<feature type="chain" id="PRO_0000306702" description="Small ribosomal subunit protein uS13">
    <location>
        <begin position="1"/>
        <end position="118"/>
    </location>
</feature>
<feature type="region of interest" description="Disordered" evidence="2">
    <location>
        <begin position="94"/>
        <end position="118"/>
    </location>
</feature>
<keyword id="KW-1185">Reference proteome</keyword>
<keyword id="KW-0687">Ribonucleoprotein</keyword>
<keyword id="KW-0689">Ribosomal protein</keyword>
<keyword id="KW-0694">RNA-binding</keyword>
<keyword id="KW-0699">rRNA-binding</keyword>
<keyword id="KW-0820">tRNA-binding</keyword>
<reference key="1">
    <citation type="submission" date="2006-12" db="EMBL/GenBank/DDBJ databases">
        <title>Complete sequence of Shewanella amazonensis SB2B.</title>
        <authorList>
            <consortium name="US DOE Joint Genome Institute"/>
            <person name="Copeland A."/>
            <person name="Lucas S."/>
            <person name="Lapidus A."/>
            <person name="Barry K."/>
            <person name="Detter J.C."/>
            <person name="Glavina del Rio T."/>
            <person name="Hammon N."/>
            <person name="Israni S."/>
            <person name="Dalin E."/>
            <person name="Tice H."/>
            <person name="Pitluck S."/>
            <person name="Munk A.C."/>
            <person name="Brettin T."/>
            <person name="Bruce D."/>
            <person name="Han C."/>
            <person name="Tapia R."/>
            <person name="Gilna P."/>
            <person name="Schmutz J."/>
            <person name="Larimer F."/>
            <person name="Land M."/>
            <person name="Hauser L."/>
            <person name="Kyrpides N."/>
            <person name="Mikhailova N."/>
            <person name="Fredrickson J."/>
            <person name="Richardson P."/>
        </authorList>
    </citation>
    <scope>NUCLEOTIDE SEQUENCE [LARGE SCALE GENOMIC DNA]</scope>
    <source>
        <strain>ATCC BAA-1098 / SB2B</strain>
    </source>
</reference>
<proteinExistence type="inferred from homology"/>
<protein>
    <recommendedName>
        <fullName evidence="1">Small ribosomal subunit protein uS13</fullName>
    </recommendedName>
    <alternativeName>
        <fullName evidence="3">30S ribosomal protein S13</fullName>
    </alternativeName>
</protein>
<evidence type="ECO:0000255" key="1">
    <source>
        <dbReference type="HAMAP-Rule" id="MF_01315"/>
    </source>
</evidence>
<evidence type="ECO:0000256" key="2">
    <source>
        <dbReference type="SAM" id="MobiDB-lite"/>
    </source>
</evidence>
<evidence type="ECO:0000305" key="3"/>
<dbReference type="EMBL" id="CP000507">
    <property type="protein sequence ID" value="ABL98446.1"/>
    <property type="molecule type" value="Genomic_DNA"/>
</dbReference>
<dbReference type="RefSeq" id="WP_011758356.1">
    <property type="nucleotide sequence ID" value="NC_008700.1"/>
</dbReference>
<dbReference type="SMR" id="A1S240"/>
<dbReference type="STRING" id="326297.Sama_0235"/>
<dbReference type="KEGG" id="saz:Sama_0235"/>
<dbReference type="eggNOG" id="COG0099">
    <property type="taxonomic scope" value="Bacteria"/>
</dbReference>
<dbReference type="HOGENOM" id="CLU_103849_1_2_6"/>
<dbReference type="OrthoDB" id="9803610at2"/>
<dbReference type="Proteomes" id="UP000009175">
    <property type="component" value="Chromosome"/>
</dbReference>
<dbReference type="GO" id="GO:0005829">
    <property type="term" value="C:cytosol"/>
    <property type="evidence" value="ECO:0007669"/>
    <property type="project" value="TreeGrafter"/>
</dbReference>
<dbReference type="GO" id="GO:0015935">
    <property type="term" value="C:small ribosomal subunit"/>
    <property type="evidence" value="ECO:0007669"/>
    <property type="project" value="TreeGrafter"/>
</dbReference>
<dbReference type="GO" id="GO:0019843">
    <property type="term" value="F:rRNA binding"/>
    <property type="evidence" value="ECO:0007669"/>
    <property type="project" value="UniProtKB-UniRule"/>
</dbReference>
<dbReference type="GO" id="GO:0003735">
    <property type="term" value="F:structural constituent of ribosome"/>
    <property type="evidence" value="ECO:0007669"/>
    <property type="project" value="InterPro"/>
</dbReference>
<dbReference type="GO" id="GO:0000049">
    <property type="term" value="F:tRNA binding"/>
    <property type="evidence" value="ECO:0007669"/>
    <property type="project" value="UniProtKB-UniRule"/>
</dbReference>
<dbReference type="GO" id="GO:0006412">
    <property type="term" value="P:translation"/>
    <property type="evidence" value="ECO:0007669"/>
    <property type="project" value="UniProtKB-UniRule"/>
</dbReference>
<dbReference type="FunFam" id="1.10.8.50:FF:000001">
    <property type="entry name" value="30S ribosomal protein S13"/>
    <property type="match status" value="1"/>
</dbReference>
<dbReference type="FunFam" id="4.10.910.10:FF:000001">
    <property type="entry name" value="30S ribosomal protein S13"/>
    <property type="match status" value="1"/>
</dbReference>
<dbReference type="Gene3D" id="1.10.8.50">
    <property type="match status" value="1"/>
</dbReference>
<dbReference type="Gene3D" id="4.10.910.10">
    <property type="entry name" value="30s ribosomal protein s13, domain 2"/>
    <property type="match status" value="1"/>
</dbReference>
<dbReference type="HAMAP" id="MF_01315">
    <property type="entry name" value="Ribosomal_uS13"/>
    <property type="match status" value="1"/>
</dbReference>
<dbReference type="InterPro" id="IPR027437">
    <property type="entry name" value="Rbsml_uS13_C"/>
</dbReference>
<dbReference type="InterPro" id="IPR001892">
    <property type="entry name" value="Ribosomal_uS13"/>
</dbReference>
<dbReference type="InterPro" id="IPR010979">
    <property type="entry name" value="Ribosomal_uS13-like_H2TH"/>
</dbReference>
<dbReference type="InterPro" id="IPR019980">
    <property type="entry name" value="Ribosomal_uS13_bac-type"/>
</dbReference>
<dbReference type="InterPro" id="IPR018269">
    <property type="entry name" value="Ribosomal_uS13_CS"/>
</dbReference>
<dbReference type="NCBIfam" id="TIGR03631">
    <property type="entry name" value="uS13_bact"/>
    <property type="match status" value="1"/>
</dbReference>
<dbReference type="PANTHER" id="PTHR10871">
    <property type="entry name" value="30S RIBOSOMAL PROTEIN S13/40S RIBOSOMAL PROTEIN S18"/>
    <property type="match status" value="1"/>
</dbReference>
<dbReference type="PANTHER" id="PTHR10871:SF1">
    <property type="entry name" value="SMALL RIBOSOMAL SUBUNIT PROTEIN US13M"/>
    <property type="match status" value="1"/>
</dbReference>
<dbReference type="Pfam" id="PF00416">
    <property type="entry name" value="Ribosomal_S13"/>
    <property type="match status" value="1"/>
</dbReference>
<dbReference type="PIRSF" id="PIRSF002134">
    <property type="entry name" value="Ribosomal_S13"/>
    <property type="match status" value="1"/>
</dbReference>
<dbReference type="SUPFAM" id="SSF46946">
    <property type="entry name" value="S13-like H2TH domain"/>
    <property type="match status" value="1"/>
</dbReference>
<dbReference type="PROSITE" id="PS00646">
    <property type="entry name" value="RIBOSOMAL_S13_1"/>
    <property type="match status" value="1"/>
</dbReference>
<dbReference type="PROSITE" id="PS50159">
    <property type="entry name" value="RIBOSOMAL_S13_2"/>
    <property type="match status" value="1"/>
</dbReference>